<keyword id="KW-1185">Reference proteome</keyword>
<keyword id="KW-0814">Transposable element</keyword>
<comment type="function">
    <text>Bs1 is probably an active plant retrotransposon.</text>
</comment>
<proteinExistence type="predicted"/>
<feature type="chain" id="PRO_0000076293" description="Putative Pol polyprotein from transposon element Bs1">
    <location>
        <begin position="1"/>
        <end position="740"/>
    </location>
</feature>
<feature type="repeat" description="PPR">
    <location>
        <begin position="469"/>
        <end position="503"/>
    </location>
</feature>
<protein>
    <recommendedName>
        <fullName>Putative Pol polyprotein from transposon element Bs1</fullName>
        <shortName>ORF 1</shortName>
    </recommendedName>
</protein>
<reference key="1">
    <citation type="journal article" date="1989" name="Plant Mol. Biol.">
        <title>An unusually compact retrotransposon in maize.</title>
        <authorList>
            <person name="Johns M.A."/>
            <person name="Babcock M.S."/>
            <person name="Fuerstenberg S.M."/>
            <person name="Fuerstenberg S.I."/>
            <person name="Freeling M."/>
            <person name="Simpson R.B."/>
        </authorList>
    </citation>
    <scope>NUCLEOTIDE SEQUENCE [GENOMIC DNA]</scope>
    <source>
        <tissue>Seedling</tissue>
    </source>
</reference>
<reference key="2">
    <citation type="journal article" date="1989" name="Proc. Natl. Acad. Sci. U.S.A.">
        <title>Structure and coding properties of Bs1, a maize retrovirus-like transposon.</title>
        <authorList>
            <person name="Jin Y.K."/>
            <person name="Bennetzen J.L."/>
        </authorList>
    </citation>
    <scope>NUCLEOTIDE SEQUENCE [GENOMIC DNA]</scope>
</reference>
<name>POLB_MAIZE</name>
<dbReference type="EMBL" id="X16080">
    <property type="protein sequence ID" value="CAA34210.1"/>
    <property type="molecule type" value="Genomic_DNA"/>
</dbReference>
<dbReference type="EMBL" id="M25397">
    <property type="protein sequence ID" value="AAA66269.1"/>
    <property type="molecule type" value="Genomic_DNA"/>
</dbReference>
<dbReference type="PIR" id="T03975">
    <property type="entry name" value="T03975"/>
</dbReference>
<dbReference type="SMR" id="P15718"/>
<dbReference type="STRING" id="4577.P15718"/>
<dbReference type="MaizeGDB" id="69184"/>
<dbReference type="InParanoid" id="P15718"/>
<dbReference type="Proteomes" id="UP000007305">
    <property type="component" value="Unplaced"/>
</dbReference>
<dbReference type="ExpressionAtlas" id="P15718">
    <property type="expression patterns" value="baseline and differential"/>
</dbReference>
<dbReference type="GO" id="GO:0000166">
    <property type="term" value="F:nucleotide binding"/>
    <property type="evidence" value="ECO:0007669"/>
    <property type="project" value="InterPro"/>
</dbReference>
<dbReference type="Gene3D" id="3.40.1110.10">
    <property type="entry name" value="Calcium-transporting ATPase, cytoplasmic domain N"/>
    <property type="match status" value="1"/>
</dbReference>
<dbReference type="Gene3D" id="2.70.150.10">
    <property type="entry name" value="Calcium-transporting ATPase, cytoplasmic transduction domain A"/>
    <property type="match status" value="1"/>
</dbReference>
<dbReference type="Gene3D" id="1.20.1110.10">
    <property type="entry name" value="Calcium-transporting ATPase, transmembrane domain"/>
    <property type="match status" value="1"/>
</dbReference>
<dbReference type="Gene3D" id="2.60.120.260">
    <property type="entry name" value="Galactose-binding domain-like"/>
    <property type="match status" value="1"/>
</dbReference>
<dbReference type="Gene3D" id="3.40.50.1000">
    <property type="entry name" value="HAD superfamily/HAD-like"/>
    <property type="match status" value="1"/>
</dbReference>
<dbReference type="InterPro" id="IPR023299">
    <property type="entry name" value="ATPase_P-typ_cyto_dom_N"/>
</dbReference>
<dbReference type="InterPro" id="IPR023298">
    <property type="entry name" value="ATPase_P-typ_TM_dom_sf"/>
</dbReference>
<dbReference type="InterPro" id="IPR008250">
    <property type="entry name" value="ATPase_P-typ_transduc_dom_A_sf"/>
</dbReference>
<dbReference type="InterPro" id="IPR023214">
    <property type="entry name" value="HAD_sf"/>
</dbReference>
<dbReference type="InterPro" id="IPR002885">
    <property type="entry name" value="Pentatricopeptide_rpt"/>
</dbReference>
<dbReference type="PANTHER" id="PTHR42861">
    <property type="entry name" value="CALCIUM-TRANSPORTING ATPASE"/>
    <property type="match status" value="1"/>
</dbReference>
<dbReference type="Pfam" id="PF00122">
    <property type="entry name" value="E1-E2_ATPase"/>
    <property type="match status" value="1"/>
</dbReference>
<dbReference type="SUPFAM" id="SSF81653">
    <property type="entry name" value="Calcium ATPase, transduction domain A"/>
    <property type="match status" value="1"/>
</dbReference>
<dbReference type="SUPFAM" id="SSF81665">
    <property type="entry name" value="Calcium ATPase, transmembrane domain M"/>
    <property type="match status" value="1"/>
</dbReference>
<dbReference type="PROSITE" id="PS51375">
    <property type="entry name" value="PPR"/>
    <property type="match status" value="1"/>
</dbReference>
<accession>P15718</accession>
<sequence length="740" mass="81168">MEPTLQSAMEEQLKILREISDRLAAQEARWRSRESTVTQHSRSIHDLEVAMASAPSATLRAELDAPVAVTYERLDATEAASAARVSALESTTATFDMLFDNSDIVEKFNAEVVADDWGGLFGQHAHPLDSGGARLLLPSAALPFASATDTAFSSIYGVECGTIHTYTAALTRPAALHKPLVVAHAKCSTPGHNRVCAETQRQGPRQARRQCRLRVHVRRLHFTGLQLHVRQHGRRRQHVVHVQRVLPGAELDGRGLRLPWPRVAHGDRPFRAHLQLHHIDPDGGGGGGHGITPPERWLSRAGAYNAAAPNEVDVLRWTLKGVLWPRVTYCIAGWIDLGDGVAEGADHAVRVRFRVDDGCVVEGGTVCAESGSWTEIKGVFRLKRNARVMEVYVQGAVAGIDVKVTDPQVFATNVIQNLAYVDFFTKHFDWAVFEKEFRWYHVEDAAKVFDKMLTKGEEAPSVQRGVVMTAVAHNLLVQALFMDGRASDAYVVLEEMQNNGPFPDVFTYTLKVLKNGQWAEEESTILVPGDIIGVKLGDIISADTRLLEGDPLKIDQSALTGNFCICSIVAGMLVEFIVMYPIQDMVYRPRIDKLLVLLIGGIPIAMPTVLSVTMSIGAYRLAQQGAITKRMTTIEEMAGMDVPCSDKTGTLPWTKLTVIKSLVDVFQRGADQDAVILMDARASCTKNQDAIEATIVSMLAAPKEACAGVQEIQFLPFNPNDKRTAVTYMSLIYALSPGKA</sequence>
<organism>
    <name type="scientific">Zea mays</name>
    <name type="common">Maize</name>
    <dbReference type="NCBI Taxonomy" id="4577"/>
    <lineage>
        <taxon>Eukaryota</taxon>
        <taxon>Viridiplantae</taxon>
        <taxon>Streptophyta</taxon>
        <taxon>Embryophyta</taxon>
        <taxon>Tracheophyta</taxon>
        <taxon>Spermatophyta</taxon>
        <taxon>Magnoliopsida</taxon>
        <taxon>Liliopsida</taxon>
        <taxon>Poales</taxon>
        <taxon>Poaceae</taxon>
        <taxon>PACMAD clade</taxon>
        <taxon>Panicoideae</taxon>
        <taxon>Andropogonodae</taxon>
        <taxon>Andropogoneae</taxon>
        <taxon>Tripsacinae</taxon>
        <taxon>Zea</taxon>
    </lineage>
</organism>